<evidence type="ECO:0000255" key="1">
    <source>
        <dbReference type="HAMAP-Rule" id="MF_01147"/>
    </source>
</evidence>
<organism>
    <name type="scientific">Campylobacter jejuni subsp. doylei (strain ATCC BAA-1458 / RM4099 / 269.97)</name>
    <dbReference type="NCBI Taxonomy" id="360109"/>
    <lineage>
        <taxon>Bacteria</taxon>
        <taxon>Pseudomonadati</taxon>
        <taxon>Campylobacterota</taxon>
        <taxon>Epsilonproteobacteria</taxon>
        <taxon>Campylobacterales</taxon>
        <taxon>Campylobacteraceae</taxon>
        <taxon>Campylobacter</taxon>
    </lineage>
</organism>
<sequence>MEFWQHIYSNFNVIAFSIFGLKVHWYGIMYDVALLLALLLAKFFVRKFQLDINEKHLYSYFIWVEIGVILGARLGYILIYDANTMYYITHPWQIFNPYINGEFVGIRGMSYHGAIIGFLIATLLFCKKYKTNPWIFLDLVALSVPLAYVFGRIGNFLNQELFGRITNVPWGIYIDGVLRHPSQFYEAFLEGIVVFIIVYLARFKQSFQGELILVYAGAYSLARFICEFYREPDFGIGFVLWGMSMGQILSFIMFITALLVYICIKFKKVNI</sequence>
<reference key="1">
    <citation type="submission" date="2007-07" db="EMBL/GenBank/DDBJ databases">
        <title>Complete genome sequence of Campylobacter jejuni subsp doylei 269.97 isolated from human blood.</title>
        <authorList>
            <person name="Fouts D.E."/>
            <person name="Mongodin E.F."/>
            <person name="Puiu D."/>
            <person name="Sebastian Y."/>
            <person name="Miller W.G."/>
            <person name="Mandrell R.E."/>
            <person name="Lastovica A.J."/>
            <person name="Nelson K.E."/>
        </authorList>
    </citation>
    <scope>NUCLEOTIDE SEQUENCE [LARGE SCALE GENOMIC DNA]</scope>
    <source>
        <strain>ATCC BAA-1458 / RM4099 / 269.97</strain>
    </source>
</reference>
<proteinExistence type="inferred from homology"/>
<dbReference type="EC" id="2.5.1.145" evidence="1"/>
<dbReference type="EMBL" id="CP000768">
    <property type="protein sequence ID" value="ABS44370.1"/>
    <property type="molecule type" value="Genomic_DNA"/>
</dbReference>
<dbReference type="SMR" id="A7H4X1"/>
<dbReference type="KEGG" id="cjd:JJD26997_1550"/>
<dbReference type="HOGENOM" id="CLU_013386_1_2_7"/>
<dbReference type="UniPathway" id="UPA00664"/>
<dbReference type="Proteomes" id="UP000002302">
    <property type="component" value="Chromosome"/>
</dbReference>
<dbReference type="GO" id="GO:0005886">
    <property type="term" value="C:plasma membrane"/>
    <property type="evidence" value="ECO:0007669"/>
    <property type="project" value="UniProtKB-SubCell"/>
</dbReference>
<dbReference type="GO" id="GO:0008961">
    <property type="term" value="F:phosphatidylglycerol-prolipoprotein diacylglyceryl transferase activity"/>
    <property type="evidence" value="ECO:0007669"/>
    <property type="project" value="UniProtKB-UniRule"/>
</dbReference>
<dbReference type="GO" id="GO:0042158">
    <property type="term" value="P:lipoprotein biosynthetic process"/>
    <property type="evidence" value="ECO:0007669"/>
    <property type="project" value="UniProtKB-UniRule"/>
</dbReference>
<dbReference type="HAMAP" id="MF_01147">
    <property type="entry name" value="Lgt"/>
    <property type="match status" value="1"/>
</dbReference>
<dbReference type="InterPro" id="IPR001640">
    <property type="entry name" value="Lgt"/>
</dbReference>
<dbReference type="NCBIfam" id="TIGR00544">
    <property type="entry name" value="lgt"/>
    <property type="match status" value="1"/>
</dbReference>
<dbReference type="PANTHER" id="PTHR30589:SF0">
    <property type="entry name" value="PHOSPHATIDYLGLYCEROL--PROLIPOPROTEIN DIACYLGLYCERYL TRANSFERASE"/>
    <property type="match status" value="1"/>
</dbReference>
<dbReference type="PANTHER" id="PTHR30589">
    <property type="entry name" value="PROLIPOPROTEIN DIACYLGLYCERYL TRANSFERASE"/>
    <property type="match status" value="1"/>
</dbReference>
<dbReference type="Pfam" id="PF01790">
    <property type="entry name" value="LGT"/>
    <property type="match status" value="1"/>
</dbReference>
<dbReference type="PROSITE" id="PS01311">
    <property type="entry name" value="LGT"/>
    <property type="match status" value="1"/>
</dbReference>
<keyword id="KW-0997">Cell inner membrane</keyword>
<keyword id="KW-1003">Cell membrane</keyword>
<keyword id="KW-0472">Membrane</keyword>
<keyword id="KW-0808">Transferase</keyword>
<keyword id="KW-0812">Transmembrane</keyword>
<keyword id="KW-1133">Transmembrane helix</keyword>
<comment type="function">
    <text evidence="1">Catalyzes the transfer of the diacylglyceryl group from phosphatidylglycerol to the sulfhydryl group of the N-terminal cysteine of a prolipoprotein, the first step in the formation of mature lipoproteins.</text>
</comment>
<comment type="catalytic activity">
    <reaction evidence="1">
        <text>L-cysteinyl-[prolipoprotein] + a 1,2-diacyl-sn-glycero-3-phospho-(1'-sn-glycerol) = an S-1,2-diacyl-sn-glyceryl-L-cysteinyl-[prolipoprotein] + sn-glycerol 1-phosphate + H(+)</text>
        <dbReference type="Rhea" id="RHEA:56712"/>
        <dbReference type="Rhea" id="RHEA-COMP:14679"/>
        <dbReference type="Rhea" id="RHEA-COMP:14680"/>
        <dbReference type="ChEBI" id="CHEBI:15378"/>
        <dbReference type="ChEBI" id="CHEBI:29950"/>
        <dbReference type="ChEBI" id="CHEBI:57685"/>
        <dbReference type="ChEBI" id="CHEBI:64716"/>
        <dbReference type="ChEBI" id="CHEBI:140658"/>
        <dbReference type="EC" id="2.5.1.145"/>
    </reaction>
</comment>
<comment type="pathway">
    <text evidence="1">Protein modification; lipoprotein biosynthesis (diacylglyceryl transfer).</text>
</comment>
<comment type="subcellular location">
    <subcellularLocation>
        <location evidence="1">Cell inner membrane</location>
        <topology evidence="1">Multi-pass membrane protein</topology>
    </subcellularLocation>
</comment>
<comment type="similarity">
    <text evidence="1">Belongs to the Lgt family.</text>
</comment>
<gene>
    <name evidence="1" type="primary">lgt</name>
    <name type="ordered locus">JJD26997_1550</name>
</gene>
<name>LGT_CAMJD</name>
<accession>A7H4X1</accession>
<feature type="chain" id="PRO_1000053411" description="Phosphatidylglycerol--prolipoprotein diacylglyceryl transferase">
    <location>
        <begin position="1"/>
        <end position="271"/>
    </location>
</feature>
<feature type="transmembrane region" description="Helical" evidence="1">
    <location>
        <begin position="25"/>
        <end position="45"/>
    </location>
</feature>
<feature type="transmembrane region" description="Helical" evidence="1">
    <location>
        <begin position="60"/>
        <end position="80"/>
    </location>
</feature>
<feature type="transmembrane region" description="Helical" evidence="1">
    <location>
        <begin position="103"/>
        <end position="123"/>
    </location>
</feature>
<feature type="transmembrane region" description="Helical" evidence="1">
    <location>
        <begin position="134"/>
        <end position="154"/>
    </location>
</feature>
<feature type="transmembrane region" description="Helical" evidence="1">
    <location>
        <begin position="181"/>
        <end position="201"/>
    </location>
</feature>
<feature type="transmembrane region" description="Helical" evidence="1">
    <location>
        <begin position="209"/>
        <end position="229"/>
    </location>
</feature>
<feature type="transmembrane region" description="Helical" evidence="1">
    <location>
        <begin position="235"/>
        <end position="255"/>
    </location>
</feature>
<feature type="binding site" evidence="1">
    <location>
        <position position="152"/>
    </location>
    <ligand>
        <name>a 1,2-diacyl-sn-glycero-3-phospho-(1'-sn-glycerol)</name>
        <dbReference type="ChEBI" id="CHEBI:64716"/>
    </ligand>
</feature>
<protein>
    <recommendedName>
        <fullName evidence="1">Phosphatidylglycerol--prolipoprotein diacylglyceryl transferase</fullName>
        <ecNumber evidence="1">2.5.1.145</ecNumber>
    </recommendedName>
</protein>